<proteinExistence type="inferred from homology"/>
<dbReference type="EMBL" id="AM181176">
    <property type="protein sequence ID" value="CAY50115.1"/>
    <property type="molecule type" value="Genomic_DNA"/>
</dbReference>
<dbReference type="RefSeq" id="WP_010567912.1">
    <property type="nucleotide sequence ID" value="NC_012660.1"/>
</dbReference>
<dbReference type="SMR" id="C3JY63"/>
<dbReference type="STRING" id="294.SRM1_03433"/>
<dbReference type="GeneID" id="93465155"/>
<dbReference type="eggNOG" id="COG2127">
    <property type="taxonomic scope" value="Bacteria"/>
</dbReference>
<dbReference type="HOGENOM" id="CLU_134358_2_0_6"/>
<dbReference type="OrthoDB" id="9796121at2"/>
<dbReference type="GO" id="GO:0030163">
    <property type="term" value="P:protein catabolic process"/>
    <property type="evidence" value="ECO:0007669"/>
    <property type="project" value="InterPro"/>
</dbReference>
<dbReference type="GO" id="GO:0006508">
    <property type="term" value="P:proteolysis"/>
    <property type="evidence" value="ECO:0007669"/>
    <property type="project" value="UniProtKB-UniRule"/>
</dbReference>
<dbReference type="FunFam" id="3.30.1390.10:FF:000002">
    <property type="entry name" value="ATP-dependent Clp protease adapter protein ClpS"/>
    <property type="match status" value="1"/>
</dbReference>
<dbReference type="Gene3D" id="3.30.1390.10">
    <property type="match status" value="1"/>
</dbReference>
<dbReference type="HAMAP" id="MF_00302">
    <property type="entry name" value="ClpS"/>
    <property type="match status" value="1"/>
</dbReference>
<dbReference type="InterPro" id="IPR022935">
    <property type="entry name" value="ClpS"/>
</dbReference>
<dbReference type="InterPro" id="IPR003769">
    <property type="entry name" value="ClpS_core"/>
</dbReference>
<dbReference type="InterPro" id="IPR014719">
    <property type="entry name" value="Ribosomal_bL12_C/ClpS-like"/>
</dbReference>
<dbReference type="NCBIfam" id="NF000669">
    <property type="entry name" value="PRK00033.1-2"/>
    <property type="match status" value="1"/>
</dbReference>
<dbReference type="NCBIfam" id="NF000672">
    <property type="entry name" value="PRK00033.1-5"/>
    <property type="match status" value="1"/>
</dbReference>
<dbReference type="PANTHER" id="PTHR33473:SF19">
    <property type="entry name" value="ATP-DEPENDENT CLP PROTEASE ADAPTER PROTEIN CLPS"/>
    <property type="match status" value="1"/>
</dbReference>
<dbReference type="PANTHER" id="PTHR33473">
    <property type="entry name" value="ATP-DEPENDENT CLP PROTEASE ADAPTER PROTEIN CLPS1, CHLOROPLASTIC"/>
    <property type="match status" value="1"/>
</dbReference>
<dbReference type="Pfam" id="PF02617">
    <property type="entry name" value="ClpS"/>
    <property type="match status" value="1"/>
</dbReference>
<dbReference type="SUPFAM" id="SSF54736">
    <property type="entry name" value="ClpS-like"/>
    <property type="match status" value="1"/>
</dbReference>
<organism>
    <name type="scientific">Pseudomonas fluorescens (strain SBW25)</name>
    <dbReference type="NCBI Taxonomy" id="216595"/>
    <lineage>
        <taxon>Bacteria</taxon>
        <taxon>Pseudomonadati</taxon>
        <taxon>Pseudomonadota</taxon>
        <taxon>Gammaproteobacteria</taxon>
        <taxon>Pseudomonadales</taxon>
        <taxon>Pseudomonadaceae</taxon>
        <taxon>Pseudomonas</taxon>
    </lineage>
</organism>
<reference key="1">
    <citation type="journal article" date="2009" name="Genome Biol.">
        <title>Genomic and genetic analyses of diversity and plant interactions of Pseudomonas fluorescens.</title>
        <authorList>
            <person name="Silby M.W."/>
            <person name="Cerdeno-Tarraga A.M."/>
            <person name="Vernikos G.S."/>
            <person name="Giddens S.R."/>
            <person name="Jackson R.W."/>
            <person name="Preston G.M."/>
            <person name="Zhang X.-X."/>
            <person name="Moon C.D."/>
            <person name="Gehrig S.M."/>
            <person name="Godfrey S.A.C."/>
            <person name="Knight C.G."/>
            <person name="Malone J.G."/>
            <person name="Robinson Z."/>
            <person name="Spiers A.J."/>
            <person name="Harris S."/>
            <person name="Challis G.L."/>
            <person name="Yaxley A.M."/>
            <person name="Harris D."/>
            <person name="Seeger K."/>
            <person name="Murphy L."/>
            <person name="Rutter S."/>
            <person name="Squares R."/>
            <person name="Quail M.A."/>
            <person name="Saunders E."/>
            <person name="Mavromatis K."/>
            <person name="Brettin T.S."/>
            <person name="Bentley S.D."/>
            <person name="Hothersall J."/>
            <person name="Stephens E."/>
            <person name="Thomas C.M."/>
            <person name="Parkhill J."/>
            <person name="Levy S.B."/>
            <person name="Rainey P.B."/>
            <person name="Thomson N.R."/>
        </authorList>
    </citation>
    <scope>NUCLEOTIDE SEQUENCE [LARGE SCALE GENOMIC DNA]</scope>
    <source>
        <strain>SBW25</strain>
    </source>
</reference>
<protein>
    <recommendedName>
        <fullName evidence="1">ATP-dependent Clp protease adapter protein ClpS</fullName>
    </recommendedName>
</protein>
<name>CLPS_PSEFS</name>
<comment type="function">
    <text evidence="1">Involved in the modulation of the specificity of the ClpAP-mediated ATP-dependent protein degradation.</text>
</comment>
<comment type="subunit">
    <text evidence="1">Binds to the N-terminal domain of the chaperone ClpA.</text>
</comment>
<comment type="similarity">
    <text evidence="1">Belongs to the ClpS family.</text>
</comment>
<evidence type="ECO:0000255" key="1">
    <source>
        <dbReference type="HAMAP-Rule" id="MF_00302"/>
    </source>
</evidence>
<feature type="chain" id="PRO_1000204975" description="ATP-dependent Clp protease adapter protein ClpS">
    <location>
        <begin position="1"/>
        <end position="122"/>
    </location>
</feature>
<sequence>MHAISQIRLTFNQDRPDHEHDDDGSAGIAVQEAKPALQAPPMYKVVLFNDDYTPMDFVVEVLEVFFNLNRELATKVMLAVHTEGRAVCGVFTRDIAETKAMQVNQYARESQHPLLCEIEKDG</sequence>
<gene>
    <name evidence="1" type="primary">clpS</name>
    <name type="ordered locus">PFLU_3806</name>
</gene>
<accession>C3JY63</accession>